<accession>B4F277</accession>
<protein>
    <recommendedName>
        <fullName evidence="1">Small ribosomal subunit protein bS18</fullName>
    </recommendedName>
    <alternativeName>
        <fullName evidence="2">30S ribosomal protein S18</fullName>
    </alternativeName>
</protein>
<keyword id="KW-1185">Reference proteome</keyword>
<keyword id="KW-0687">Ribonucleoprotein</keyword>
<keyword id="KW-0689">Ribosomal protein</keyword>
<keyword id="KW-0694">RNA-binding</keyword>
<keyword id="KW-0699">rRNA-binding</keyword>
<dbReference type="EMBL" id="AM942759">
    <property type="protein sequence ID" value="CAR46619.1"/>
    <property type="molecule type" value="Genomic_DNA"/>
</dbReference>
<dbReference type="RefSeq" id="WP_000135199.1">
    <property type="nucleotide sequence ID" value="NC_010554.1"/>
</dbReference>
<dbReference type="SMR" id="B4F277"/>
<dbReference type="EnsemblBacteria" id="CAR46619">
    <property type="protein sequence ID" value="CAR46619"/>
    <property type="gene ID" value="PMI3376"/>
</dbReference>
<dbReference type="GeneID" id="98186237"/>
<dbReference type="KEGG" id="pmr:PMI3376"/>
<dbReference type="eggNOG" id="COG0238">
    <property type="taxonomic scope" value="Bacteria"/>
</dbReference>
<dbReference type="HOGENOM" id="CLU_148710_2_3_6"/>
<dbReference type="Proteomes" id="UP000008319">
    <property type="component" value="Chromosome"/>
</dbReference>
<dbReference type="GO" id="GO:0022627">
    <property type="term" value="C:cytosolic small ribosomal subunit"/>
    <property type="evidence" value="ECO:0007669"/>
    <property type="project" value="TreeGrafter"/>
</dbReference>
<dbReference type="GO" id="GO:0070181">
    <property type="term" value="F:small ribosomal subunit rRNA binding"/>
    <property type="evidence" value="ECO:0007669"/>
    <property type="project" value="TreeGrafter"/>
</dbReference>
<dbReference type="GO" id="GO:0003735">
    <property type="term" value="F:structural constituent of ribosome"/>
    <property type="evidence" value="ECO:0007669"/>
    <property type="project" value="InterPro"/>
</dbReference>
<dbReference type="GO" id="GO:0006412">
    <property type="term" value="P:translation"/>
    <property type="evidence" value="ECO:0007669"/>
    <property type="project" value="UniProtKB-UniRule"/>
</dbReference>
<dbReference type="FunFam" id="4.10.640.10:FF:000001">
    <property type="entry name" value="30S ribosomal protein S18"/>
    <property type="match status" value="1"/>
</dbReference>
<dbReference type="Gene3D" id="4.10.640.10">
    <property type="entry name" value="Ribosomal protein S18"/>
    <property type="match status" value="1"/>
</dbReference>
<dbReference type="HAMAP" id="MF_00270">
    <property type="entry name" value="Ribosomal_bS18"/>
    <property type="match status" value="1"/>
</dbReference>
<dbReference type="InterPro" id="IPR001648">
    <property type="entry name" value="Ribosomal_bS18"/>
</dbReference>
<dbReference type="InterPro" id="IPR018275">
    <property type="entry name" value="Ribosomal_bS18_CS"/>
</dbReference>
<dbReference type="InterPro" id="IPR036870">
    <property type="entry name" value="Ribosomal_bS18_sf"/>
</dbReference>
<dbReference type="NCBIfam" id="TIGR00165">
    <property type="entry name" value="S18"/>
    <property type="match status" value="1"/>
</dbReference>
<dbReference type="PANTHER" id="PTHR13479">
    <property type="entry name" value="30S RIBOSOMAL PROTEIN S18"/>
    <property type="match status" value="1"/>
</dbReference>
<dbReference type="PANTHER" id="PTHR13479:SF40">
    <property type="entry name" value="SMALL RIBOSOMAL SUBUNIT PROTEIN BS18M"/>
    <property type="match status" value="1"/>
</dbReference>
<dbReference type="Pfam" id="PF01084">
    <property type="entry name" value="Ribosomal_S18"/>
    <property type="match status" value="1"/>
</dbReference>
<dbReference type="PRINTS" id="PR00974">
    <property type="entry name" value="RIBOSOMALS18"/>
</dbReference>
<dbReference type="SUPFAM" id="SSF46911">
    <property type="entry name" value="Ribosomal protein S18"/>
    <property type="match status" value="1"/>
</dbReference>
<dbReference type="PROSITE" id="PS00057">
    <property type="entry name" value="RIBOSOMAL_S18"/>
    <property type="match status" value="1"/>
</dbReference>
<sequence>MARYFRRRKFCRFTAEGVQEIDYKDIATLKNYITESGKIVPSRITGTRAKYQRQLARAIKRARYLSLLPYTDRHQ</sequence>
<evidence type="ECO:0000255" key="1">
    <source>
        <dbReference type="HAMAP-Rule" id="MF_00270"/>
    </source>
</evidence>
<evidence type="ECO:0000305" key="2"/>
<organism>
    <name type="scientific">Proteus mirabilis (strain HI4320)</name>
    <dbReference type="NCBI Taxonomy" id="529507"/>
    <lineage>
        <taxon>Bacteria</taxon>
        <taxon>Pseudomonadati</taxon>
        <taxon>Pseudomonadota</taxon>
        <taxon>Gammaproteobacteria</taxon>
        <taxon>Enterobacterales</taxon>
        <taxon>Morganellaceae</taxon>
        <taxon>Proteus</taxon>
    </lineage>
</organism>
<reference key="1">
    <citation type="journal article" date="2008" name="J. Bacteriol.">
        <title>Complete genome sequence of uropathogenic Proteus mirabilis, a master of both adherence and motility.</title>
        <authorList>
            <person name="Pearson M.M."/>
            <person name="Sebaihia M."/>
            <person name="Churcher C."/>
            <person name="Quail M.A."/>
            <person name="Seshasayee A.S."/>
            <person name="Luscombe N.M."/>
            <person name="Abdellah Z."/>
            <person name="Arrosmith C."/>
            <person name="Atkin B."/>
            <person name="Chillingworth T."/>
            <person name="Hauser H."/>
            <person name="Jagels K."/>
            <person name="Moule S."/>
            <person name="Mungall K."/>
            <person name="Norbertczak H."/>
            <person name="Rabbinowitsch E."/>
            <person name="Walker D."/>
            <person name="Whithead S."/>
            <person name="Thomson N.R."/>
            <person name="Rather P.N."/>
            <person name="Parkhill J."/>
            <person name="Mobley H.L.T."/>
        </authorList>
    </citation>
    <scope>NUCLEOTIDE SEQUENCE [LARGE SCALE GENOMIC DNA]</scope>
    <source>
        <strain>HI4320</strain>
    </source>
</reference>
<name>RS18_PROMH</name>
<feature type="chain" id="PRO_1000114438" description="Small ribosomal subunit protein bS18">
    <location>
        <begin position="1"/>
        <end position="75"/>
    </location>
</feature>
<proteinExistence type="inferred from homology"/>
<comment type="function">
    <text evidence="1">Binds as a heterodimer with protein bS6 to the central domain of the 16S rRNA, where it helps stabilize the platform of the 30S subunit.</text>
</comment>
<comment type="subunit">
    <text evidence="1">Part of the 30S ribosomal subunit. Forms a tight heterodimer with protein bS6.</text>
</comment>
<comment type="similarity">
    <text evidence="1">Belongs to the bacterial ribosomal protein bS18 family.</text>
</comment>
<gene>
    <name evidence="1" type="primary">rpsR</name>
    <name type="ordered locus">PMI3376</name>
</gene>